<comment type="function">
    <text evidence="1">May be involved in transcriptional regulation.</text>
</comment>
<comment type="interaction">
    <interactant intactId="EBI-5658292">
        <id>Q8NCP5</id>
    </interactant>
    <interactant intactId="EBI-541426">
        <id>Q9BXS5</id>
        <label>AP1M1</label>
    </interactant>
    <organismsDiffer>false</organismsDiffer>
    <experiments>3</experiments>
</comment>
<comment type="interaction">
    <interactant intactId="EBI-5658292">
        <id>Q8NCP5</id>
    </interactant>
    <interactant intactId="EBI-744506">
        <id>Q86V42</id>
        <label>FAM124A</label>
    </interactant>
    <organismsDiffer>false</organismsDiffer>
    <experiments>3</experiments>
</comment>
<comment type="interaction">
    <interactant intactId="EBI-5658292">
        <id>Q8NCP5</id>
    </interactant>
    <interactant intactId="EBI-374781">
        <id>O76003</id>
        <label>GLRX3</label>
    </interactant>
    <organismsDiffer>false</organismsDiffer>
    <experiments>3</experiments>
</comment>
<comment type="interaction">
    <interactant intactId="EBI-5658292">
        <id>Q8NCP5</id>
    </interactant>
    <interactant intactId="EBI-741774">
        <id>Q9UNA4</id>
        <label>POLI</label>
    </interactant>
    <organismsDiffer>false</organismsDiffer>
    <experiments>3</experiments>
</comment>
<comment type="interaction">
    <interactant intactId="EBI-5658292">
        <id>Q8NCP5</id>
    </interactant>
    <interactant intactId="EBI-357793">
        <id>P60900</id>
        <label>PSMA6</label>
    </interactant>
    <organismsDiffer>false</organismsDiffer>
    <experiments>3</experiments>
</comment>
<comment type="interaction">
    <interactant intactId="EBI-5658292">
        <id>Q8NCP5</id>
    </interactant>
    <interactant intactId="EBI-746453">
        <id>P54725</id>
        <label>RAD23A</label>
    </interactant>
    <organismsDiffer>false</organismsDiffer>
    <experiments>3</experiments>
</comment>
<comment type="interaction">
    <interactant intactId="EBI-5658292">
        <id>Q8NCP5</id>
    </interactant>
    <interactant intactId="EBI-8463848">
        <id>Q8NB12</id>
        <label>SMYD1</label>
    </interactant>
    <organismsDiffer>false</organismsDiffer>
    <experiments>5</experiments>
</comment>
<comment type="interaction">
    <interactant intactId="EBI-5658292">
        <id>Q8NCP5</id>
    </interactant>
    <interactant intactId="EBI-10264625">
        <id>Q8IZQ1-2</id>
        <label>WDFY3</label>
    </interactant>
    <organismsDiffer>false</organismsDiffer>
    <experiments>3</experiments>
</comment>
<comment type="interaction">
    <interactant intactId="EBI-25895743">
        <id>Q8NCP5-3</id>
    </interactant>
    <interactant intactId="EBI-12157263">
        <id>P40337-2</id>
        <label>VHL</label>
    </interactant>
    <organismsDiffer>false</organismsDiffer>
    <experiments>3</experiments>
</comment>
<comment type="subcellular location">
    <subcellularLocation>
        <location evidence="1">Nucleus</location>
    </subcellularLocation>
</comment>
<comment type="alternative products">
    <event type="alternative splicing"/>
    <isoform>
        <id>Q8NCP5-1</id>
        <name>1</name>
        <sequence type="displayed"/>
    </isoform>
    <isoform>
        <id>Q8NCP5-2</id>
        <name>2</name>
        <sequence type="described" ref="VSP_022834"/>
    </isoform>
    <isoform>
        <id>Q8NCP5-3</id>
        <name>3</name>
        <sequence type="described" ref="VSP_022836 VSP_022837"/>
    </isoform>
    <isoform>
        <id>Q8NCP5-4</id>
        <name>4</name>
        <sequence type="described" ref="VSP_022835"/>
    </isoform>
</comment>
<evidence type="ECO:0000250" key="1"/>
<evidence type="ECO:0000250" key="2">
    <source>
        <dbReference type="UniProtKB" id="Q8R0A2"/>
    </source>
</evidence>
<evidence type="ECO:0000255" key="3">
    <source>
        <dbReference type="PROSITE-ProRule" id="PRU00037"/>
    </source>
</evidence>
<evidence type="ECO:0000255" key="4">
    <source>
        <dbReference type="PROSITE-ProRule" id="PRU00042"/>
    </source>
</evidence>
<evidence type="ECO:0000256" key="5">
    <source>
        <dbReference type="SAM" id="MobiDB-lite"/>
    </source>
</evidence>
<evidence type="ECO:0000269" key="6">
    <source>
    </source>
</evidence>
<evidence type="ECO:0000303" key="7">
    <source>
    </source>
</evidence>
<evidence type="ECO:0000305" key="8"/>
<evidence type="ECO:0007744" key="9">
    <source>
    </source>
</evidence>
<evidence type="ECO:0007744" key="10">
    <source>
    </source>
</evidence>
<evidence type="ECO:0007744" key="11">
    <source>
    </source>
</evidence>
<evidence type="ECO:0007744" key="12">
    <source>
    </source>
</evidence>
<evidence type="ECO:0007744" key="13">
    <source>
    </source>
</evidence>
<evidence type="ECO:0007744" key="14">
    <source>
    </source>
</evidence>
<evidence type="ECO:0007744" key="15">
    <source>
    </source>
</evidence>
<protein>
    <recommendedName>
        <fullName>Zinc finger and BTB domain-containing protein 44</fullName>
    </recommendedName>
    <alternativeName>
        <fullName>BTB/POZ domain-containing protein 15</fullName>
    </alternativeName>
    <alternativeName>
        <fullName>Zinc finger protein 851</fullName>
    </alternativeName>
</protein>
<accession>Q8NCP5</accession>
<accession>H7BY22</accession>
<accession>Q6IPT8</accession>
<accession>Q86VJ7</accession>
<accession>Q86XX5</accession>
<keyword id="KW-0025">Alternative splicing</keyword>
<keyword id="KW-0238">DNA-binding</keyword>
<keyword id="KW-1017">Isopeptide bond</keyword>
<keyword id="KW-0479">Metal-binding</keyword>
<keyword id="KW-0539">Nucleus</keyword>
<keyword id="KW-0597">Phosphoprotein</keyword>
<keyword id="KW-1267">Proteomics identification</keyword>
<keyword id="KW-1185">Reference proteome</keyword>
<keyword id="KW-0677">Repeat</keyword>
<keyword id="KW-0804">Transcription</keyword>
<keyword id="KW-0805">Transcription regulation</keyword>
<keyword id="KW-0832">Ubl conjugation</keyword>
<keyword id="KW-0862">Zinc</keyword>
<keyword id="KW-0863">Zinc-finger</keyword>
<proteinExistence type="evidence at protein level"/>
<organism>
    <name type="scientific">Homo sapiens</name>
    <name type="common">Human</name>
    <dbReference type="NCBI Taxonomy" id="9606"/>
    <lineage>
        <taxon>Eukaryota</taxon>
        <taxon>Metazoa</taxon>
        <taxon>Chordata</taxon>
        <taxon>Craniata</taxon>
        <taxon>Vertebrata</taxon>
        <taxon>Euteleostomi</taxon>
        <taxon>Mammalia</taxon>
        <taxon>Eutheria</taxon>
        <taxon>Euarchontoglires</taxon>
        <taxon>Primates</taxon>
        <taxon>Haplorrhini</taxon>
        <taxon>Catarrhini</taxon>
        <taxon>Hominidae</taxon>
        <taxon>Homo</taxon>
    </lineage>
</organism>
<sequence>MGVKTFTHSSSSHSQEMLGKLNMLRNDGHFCDITIRVQDKIFRAHKVVLAACSDFFRTKLVGQAEDENKNVLDLHHVTVTGFIPLLEYAYTATLSINTENIIDVLAAASYMQMFSVASTCSEFMKSSILWNTPNSQPEKGLDAGQENNSNCNFTSRDGSISPVSSECSVVERTIPVCRESRRKRKSYIVMSPESPVKCGTQTSSPQVLNSSASYSENRNQPVDSSLAFPWTFPFGIDRRIQPEKVKQAENTRTLELPGPSETGRRMADYVTCESTKTTLPLGTEEDVRVKVERLSDEEVHEEVSQPVSASQSSLSDQQTVPGSEQVQEDLLISPQSSSIGSVDEGVSEGLPTLQSTSSTNAPPDDDDRLENVQYPYQLYIAPSTSSTERPSPNGPDRPFQCPTCGVRFTRIQNLKQHMLIHSGIKPFQCDRCGKKFTRAYSLKMHRLKHEGKRCFRCQICSATFTSFGEYKHHMRVSRHIIRKPRIYECKTCGAMFTNSGNLIVHLRSLNHEASELANYFQSSDFLVPDYLNQEQEETLVQYDLGEHGFESNSSVQMPVISQYHSKGKEP</sequence>
<reference key="1">
    <citation type="journal article" date="2006" name="Nature">
        <title>Human chromosome 11 DNA sequence and analysis including novel gene identification.</title>
        <authorList>
            <person name="Taylor T.D."/>
            <person name="Noguchi H."/>
            <person name="Totoki Y."/>
            <person name="Toyoda A."/>
            <person name="Kuroki Y."/>
            <person name="Dewar K."/>
            <person name="Lloyd C."/>
            <person name="Itoh T."/>
            <person name="Takeda T."/>
            <person name="Kim D.-W."/>
            <person name="She X."/>
            <person name="Barlow K.F."/>
            <person name="Bloom T."/>
            <person name="Bruford E."/>
            <person name="Chang J.L."/>
            <person name="Cuomo C.A."/>
            <person name="Eichler E."/>
            <person name="FitzGerald M.G."/>
            <person name="Jaffe D.B."/>
            <person name="LaButti K."/>
            <person name="Nicol R."/>
            <person name="Park H.-S."/>
            <person name="Seaman C."/>
            <person name="Sougnez C."/>
            <person name="Yang X."/>
            <person name="Zimmer A.R."/>
            <person name="Zody M.C."/>
            <person name="Birren B.W."/>
            <person name="Nusbaum C."/>
            <person name="Fujiyama A."/>
            <person name="Hattori M."/>
            <person name="Rogers J."/>
            <person name="Lander E.S."/>
            <person name="Sakaki Y."/>
        </authorList>
    </citation>
    <scope>NUCLEOTIDE SEQUENCE [LARGE SCALE GENOMIC DNA]</scope>
</reference>
<reference key="2">
    <citation type="journal article" date="2004" name="Genome Res.">
        <title>The status, quality, and expansion of the NIH full-length cDNA project: the Mammalian Gene Collection (MGC).</title>
        <authorList>
            <consortium name="The MGC Project Team"/>
        </authorList>
    </citation>
    <scope>NUCLEOTIDE SEQUENCE [LARGE SCALE MRNA] (ISOFORMS 1; 2; 3 AND 4)</scope>
    <scope>VARIANT GLU-185</scope>
    <source>
        <tissue>Brain</tissue>
        <tissue>Liver</tissue>
        <tissue>Testis</tissue>
    </source>
</reference>
<reference key="3">
    <citation type="journal article" date="2007" name="Science">
        <title>ATM and ATR substrate analysis reveals extensive protein networks responsive to DNA damage.</title>
        <authorList>
            <person name="Matsuoka S."/>
            <person name="Ballif B.A."/>
            <person name="Smogorzewska A."/>
            <person name="McDonald E.R. III"/>
            <person name="Hurov K.E."/>
            <person name="Luo J."/>
            <person name="Bakalarski C.E."/>
            <person name="Zhao Z."/>
            <person name="Solimini N."/>
            <person name="Lerenthal Y."/>
            <person name="Shiloh Y."/>
            <person name="Gygi S.P."/>
            <person name="Elledge S.J."/>
        </authorList>
    </citation>
    <scope>PHOSPHORYLATION [LARGE SCALE ANALYSIS] AT SER-135</scope>
    <scope>IDENTIFICATION BY MASS SPECTROMETRY [LARGE SCALE ANALYSIS]</scope>
    <source>
        <tissue>Embryonic kidney</tissue>
    </source>
</reference>
<reference key="4">
    <citation type="journal article" date="2008" name="Proc. Natl. Acad. Sci. U.S.A.">
        <title>A quantitative atlas of mitotic phosphorylation.</title>
        <authorList>
            <person name="Dephoure N."/>
            <person name="Zhou C."/>
            <person name="Villen J."/>
            <person name="Beausoleil S.A."/>
            <person name="Bakalarski C.E."/>
            <person name="Elledge S.J."/>
            <person name="Gygi S.P."/>
        </authorList>
    </citation>
    <scope>PHOSPHORYLATION [LARGE SCALE ANALYSIS] AT SER-161</scope>
    <scope>IDENTIFICATION BY MASS SPECTROMETRY [LARGE SCALE ANALYSIS]</scope>
    <source>
        <tissue>Cervix carcinoma</tissue>
    </source>
</reference>
<reference key="5">
    <citation type="journal article" date="2009" name="Sci. Signal.">
        <title>Quantitative phosphoproteomic analysis of T cell receptor signaling reveals system-wide modulation of protein-protein interactions.</title>
        <authorList>
            <person name="Mayya V."/>
            <person name="Lundgren D.H."/>
            <person name="Hwang S.-I."/>
            <person name="Rezaul K."/>
            <person name="Wu L."/>
            <person name="Eng J.K."/>
            <person name="Rodionov V."/>
            <person name="Han D.K."/>
        </authorList>
    </citation>
    <scope>PHOSPHORYLATION [LARGE SCALE ANALYSIS] AT SER-191 AND SER-194</scope>
    <scope>IDENTIFICATION BY MASS SPECTROMETRY [LARGE SCALE ANALYSIS]</scope>
    <source>
        <tissue>Leukemic T-cell</tissue>
    </source>
</reference>
<reference key="6">
    <citation type="journal article" date="2010" name="Sci. Signal.">
        <title>Quantitative phosphoproteomics reveals widespread full phosphorylation site occupancy during mitosis.</title>
        <authorList>
            <person name="Olsen J.V."/>
            <person name="Vermeulen M."/>
            <person name="Santamaria A."/>
            <person name="Kumar C."/>
            <person name="Miller M.L."/>
            <person name="Jensen L.J."/>
            <person name="Gnad F."/>
            <person name="Cox J."/>
            <person name="Jensen T.S."/>
            <person name="Nigg E.A."/>
            <person name="Brunak S."/>
            <person name="Mann M."/>
        </authorList>
    </citation>
    <scope>PHOSPHORYLATION [LARGE SCALE ANALYSIS] AT SER-194</scope>
    <scope>IDENTIFICATION BY MASS SPECTROMETRY [LARGE SCALE ANALYSIS]</scope>
    <source>
        <tissue>Cervix carcinoma</tissue>
    </source>
</reference>
<reference key="7">
    <citation type="journal article" date="2011" name="Sci. Signal.">
        <title>System-wide temporal characterization of the proteome and phosphoproteome of human embryonic stem cell differentiation.</title>
        <authorList>
            <person name="Rigbolt K.T."/>
            <person name="Prokhorova T.A."/>
            <person name="Akimov V."/>
            <person name="Henningsen J."/>
            <person name="Johansen P.T."/>
            <person name="Kratchmarova I."/>
            <person name="Kassem M."/>
            <person name="Mann M."/>
            <person name="Olsen J.V."/>
            <person name="Blagoev B."/>
        </authorList>
    </citation>
    <scope>IDENTIFICATION BY MASS SPECTROMETRY [LARGE SCALE ANALYSIS]</scope>
</reference>
<reference key="8">
    <citation type="journal article" date="2013" name="J. Proteome Res.">
        <title>Toward a comprehensive characterization of a human cancer cell phosphoproteome.</title>
        <authorList>
            <person name="Zhou H."/>
            <person name="Di Palma S."/>
            <person name="Preisinger C."/>
            <person name="Peng M."/>
            <person name="Polat A.N."/>
            <person name="Heck A.J."/>
            <person name="Mohammed S."/>
        </authorList>
    </citation>
    <scope>PHOSPHORYLATION [LARGE SCALE ANALYSIS] AT SER-161 AND SER-194</scope>
    <scope>IDENTIFICATION BY MASS SPECTROMETRY [LARGE SCALE ANALYSIS]</scope>
    <source>
        <tissue>Cervix carcinoma</tissue>
        <tissue>Erythroleukemia</tissue>
    </source>
</reference>
<reference key="9">
    <citation type="journal article" date="2015" name="Cell Rep.">
        <title>SUMO-2 orchestrates chromatin modifiers in response to DNA damage.</title>
        <authorList>
            <person name="Hendriks I.A."/>
            <person name="Treffers L.W."/>
            <person name="Verlaan-de Vries M."/>
            <person name="Olsen J.V."/>
            <person name="Vertegaal A.C."/>
        </authorList>
    </citation>
    <scope>SUMOYLATION [LARGE SCALE ANALYSIS] AT LYS-290</scope>
    <scope>IDENTIFICATION BY MASS SPECTROMETRY [LARGE SCALE ANALYSIS]</scope>
</reference>
<reference key="10">
    <citation type="journal article" date="2017" name="Nat. Struct. Mol. Biol.">
        <title>Site-specific mapping of the human SUMO proteome reveals co-modification with phosphorylation.</title>
        <authorList>
            <person name="Hendriks I.A."/>
            <person name="Lyon D."/>
            <person name="Young C."/>
            <person name="Jensen L.J."/>
            <person name="Vertegaal A.C."/>
            <person name="Nielsen M.L."/>
        </authorList>
    </citation>
    <scope>SUMOYLATION [LARGE SCALE ANALYSIS] AT LYS-4</scope>
    <scope>IDENTIFICATION BY MASS SPECTROMETRY [LARGE SCALE ANALYSIS]</scope>
</reference>
<name>ZBT44_HUMAN</name>
<gene>
    <name type="primary">ZBTB44</name>
    <name type="synonym">BTBD15</name>
    <name type="synonym">ZNF851</name>
</gene>
<dbReference type="EMBL" id="AP002986">
    <property type="status" value="NOT_ANNOTATED_CDS"/>
    <property type="molecule type" value="Genomic_DNA"/>
</dbReference>
<dbReference type="EMBL" id="AC019227">
    <property type="status" value="NOT_ANNOTATED_CDS"/>
    <property type="molecule type" value="Genomic_DNA"/>
</dbReference>
<dbReference type="EMBL" id="AP001183">
    <property type="status" value="NOT_ANNOTATED_CDS"/>
    <property type="molecule type" value="Genomic_DNA"/>
</dbReference>
<dbReference type="EMBL" id="BC030580">
    <property type="protein sequence ID" value="AAH30580.1"/>
    <property type="molecule type" value="mRNA"/>
</dbReference>
<dbReference type="EMBL" id="BC049375">
    <property type="protein sequence ID" value="AAH49375.1"/>
    <property type="molecule type" value="mRNA"/>
</dbReference>
<dbReference type="EMBL" id="BC050723">
    <property type="protein sequence ID" value="AAH50723.1"/>
    <property type="molecule type" value="mRNA"/>
</dbReference>
<dbReference type="EMBL" id="BC071729">
    <property type="protein sequence ID" value="AAH71729.1"/>
    <property type="molecule type" value="mRNA"/>
</dbReference>
<dbReference type="CCDS" id="CCDS44776.1">
    <molecule id="Q8NCP5-3"/>
</dbReference>
<dbReference type="CCDS" id="CCDS73414.1">
    <molecule id="Q8NCP5-1"/>
</dbReference>
<dbReference type="CCDS" id="CCDS73415.1">
    <molecule id="Q8NCP5-2"/>
</dbReference>
<dbReference type="RefSeq" id="NP_001288027.1">
    <property type="nucleotide sequence ID" value="NM_001301098.1"/>
</dbReference>
<dbReference type="RefSeq" id="NP_001288028.1">
    <molecule id="Q8NCP5-2"/>
    <property type="nucleotide sequence ID" value="NM_001301099.2"/>
</dbReference>
<dbReference type="RefSeq" id="NP_001357152.1">
    <molecule id="Q8NCP5-2"/>
    <property type="nucleotide sequence ID" value="NM_001370223.1"/>
</dbReference>
<dbReference type="RefSeq" id="NP_054874.3">
    <molecule id="Q8NCP5-3"/>
    <property type="nucleotide sequence ID" value="NM_014155.5"/>
</dbReference>
<dbReference type="RefSeq" id="XP_016873112.1">
    <property type="nucleotide sequence ID" value="XM_017017623.1"/>
</dbReference>
<dbReference type="RefSeq" id="XP_047282803.1">
    <molecule id="Q8NCP5-3"/>
    <property type="nucleotide sequence ID" value="XM_047426847.1"/>
</dbReference>
<dbReference type="RefSeq" id="XP_054224557.1">
    <molecule id="Q8NCP5-3"/>
    <property type="nucleotide sequence ID" value="XM_054368582.1"/>
</dbReference>
<dbReference type="SMR" id="Q8NCP5"/>
<dbReference type="BioGRID" id="118842">
    <property type="interactions" value="68"/>
</dbReference>
<dbReference type="FunCoup" id="Q8NCP5">
    <property type="interactions" value="1470"/>
</dbReference>
<dbReference type="IntAct" id="Q8NCP5">
    <property type="interactions" value="58"/>
</dbReference>
<dbReference type="MINT" id="Q8NCP5"/>
<dbReference type="STRING" id="9606.ENSP00000350574"/>
<dbReference type="ChEMBL" id="CHEMBL5069367"/>
<dbReference type="iPTMnet" id="Q8NCP5"/>
<dbReference type="PhosphoSitePlus" id="Q8NCP5"/>
<dbReference type="BioMuta" id="ZBTB44"/>
<dbReference type="DMDM" id="74760158"/>
<dbReference type="jPOST" id="Q8NCP5"/>
<dbReference type="MassIVE" id="Q8NCP5"/>
<dbReference type="PaxDb" id="9606-ENSP00000380861"/>
<dbReference type="PeptideAtlas" id="Q8NCP5"/>
<dbReference type="ProteomicsDB" id="72915">
    <molecule id="Q8NCP5-1"/>
</dbReference>
<dbReference type="ProteomicsDB" id="72916">
    <molecule id="Q8NCP5-2"/>
</dbReference>
<dbReference type="ProteomicsDB" id="72917">
    <molecule id="Q8NCP5-3"/>
</dbReference>
<dbReference type="ProteomicsDB" id="72918">
    <molecule id="Q8NCP5-4"/>
</dbReference>
<dbReference type="Antibodypedia" id="33097">
    <property type="antibodies" value="164 antibodies from 23 providers"/>
</dbReference>
<dbReference type="DNASU" id="29068"/>
<dbReference type="Ensembl" id="ENST00000445008.6">
    <molecule id="Q8NCP5-4"/>
    <property type="protein sequence ID" value="ENSP00000408079.1"/>
    <property type="gene ID" value="ENSG00000196323.14"/>
</dbReference>
<dbReference type="Ensembl" id="ENST00000525842.5">
    <molecule id="Q8NCP5-3"/>
    <property type="protein sequence ID" value="ENSP00000433457.1"/>
    <property type="gene ID" value="ENSG00000196323.14"/>
</dbReference>
<dbReference type="Ensembl" id="ENST00000530205.5">
    <molecule id="Q8NCP5-2"/>
    <property type="protein sequence ID" value="ENSP00000434177.1"/>
    <property type="gene ID" value="ENSG00000196323.14"/>
</dbReference>
<dbReference type="GeneID" id="29068"/>
<dbReference type="KEGG" id="hsa:29068"/>
<dbReference type="MANE-Select" id="ENST00000357899.9">
    <property type="protein sequence ID" value="ENSP00000350574.4"/>
    <property type="RefSeq nucleotide sequence ID" value="NM_001301098.2"/>
    <property type="RefSeq protein sequence ID" value="NP_001288027.1"/>
</dbReference>
<dbReference type="UCSC" id="uc001qfz.4">
    <molecule id="Q8NCP5-1"/>
    <property type="organism name" value="human"/>
</dbReference>
<dbReference type="AGR" id="HGNC:25001"/>
<dbReference type="CTD" id="29068"/>
<dbReference type="DisGeNET" id="29068"/>
<dbReference type="GeneCards" id="ZBTB44"/>
<dbReference type="HGNC" id="HGNC:25001">
    <property type="gene designation" value="ZBTB44"/>
</dbReference>
<dbReference type="HPA" id="ENSG00000196323">
    <property type="expression patterns" value="Low tissue specificity"/>
</dbReference>
<dbReference type="neXtProt" id="NX_Q8NCP5"/>
<dbReference type="OpenTargets" id="ENSG00000196323"/>
<dbReference type="PharmGKB" id="PA162409447"/>
<dbReference type="VEuPathDB" id="HostDB:ENSG00000196323"/>
<dbReference type="eggNOG" id="KOG1721">
    <property type="taxonomic scope" value="Eukaryota"/>
</dbReference>
<dbReference type="GeneTree" id="ENSGT00940000153306"/>
<dbReference type="HOGENOM" id="CLU_034849_1_0_1"/>
<dbReference type="InParanoid" id="Q8NCP5"/>
<dbReference type="OMA" id="VHMPVIS"/>
<dbReference type="OrthoDB" id="8117402at2759"/>
<dbReference type="PAN-GO" id="Q8NCP5">
    <property type="GO annotations" value="0 GO annotations based on evolutionary models"/>
</dbReference>
<dbReference type="PhylomeDB" id="Q8NCP5"/>
<dbReference type="TreeFam" id="TF332673"/>
<dbReference type="PathwayCommons" id="Q8NCP5"/>
<dbReference type="SignaLink" id="Q8NCP5"/>
<dbReference type="BioGRID-ORCS" id="29068">
    <property type="hits" value="13 hits in 1223 CRISPR screens"/>
</dbReference>
<dbReference type="ChiTaRS" id="ZBTB44">
    <property type="organism name" value="human"/>
</dbReference>
<dbReference type="GenomeRNAi" id="29068"/>
<dbReference type="Pharos" id="Q8NCP5">
    <property type="development level" value="Tdark"/>
</dbReference>
<dbReference type="PRO" id="PR:Q8NCP5"/>
<dbReference type="Proteomes" id="UP000005640">
    <property type="component" value="Chromosome 11"/>
</dbReference>
<dbReference type="RNAct" id="Q8NCP5">
    <property type="molecule type" value="protein"/>
</dbReference>
<dbReference type="Bgee" id="ENSG00000196323">
    <property type="expression patterns" value="Expressed in sperm and 193 other cell types or tissues"/>
</dbReference>
<dbReference type="ExpressionAtlas" id="Q8NCP5">
    <property type="expression patterns" value="baseline and differential"/>
</dbReference>
<dbReference type="GO" id="GO:0005634">
    <property type="term" value="C:nucleus"/>
    <property type="evidence" value="ECO:0007669"/>
    <property type="project" value="UniProtKB-SubCell"/>
</dbReference>
<dbReference type="GO" id="GO:0003677">
    <property type="term" value="F:DNA binding"/>
    <property type="evidence" value="ECO:0007669"/>
    <property type="project" value="UniProtKB-KW"/>
</dbReference>
<dbReference type="GO" id="GO:0008270">
    <property type="term" value="F:zinc ion binding"/>
    <property type="evidence" value="ECO:0007669"/>
    <property type="project" value="UniProtKB-KW"/>
</dbReference>
<dbReference type="CDD" id="cd18228">
    <property type="entry name" value="BTB_POZ_ZBTB44"/>
    <property type="match status" value="1"/>
</dbReference>
<dbReference type="FunFam" id="3.30.160.60:FF:000266">
    <property type="entry name" value="zinc finger and BTB domain-containing protein 44 isoform X1"/>
    <property type="match status" value="1"/>
</dbReference>
<dbReference type="FunFam" id="3.30.160.60:FF:000278">
    <property type="entry name" value="zinc finger and BTB domain-containing protein 44 isoform X1"/>
    <property type="match status" value="1"/>
</dbReference>
<dbReference type="Gene3D" id="3.30.160.60">
    <property type="entry name" value="Classic Zinc Finger"/>
    <property type="match status" value="3"/>
</dbReference>
<dbReference type="Gene3D" id="3.30.710.10">
    <property type="entry name" value="Potassium Channel Kv1.1, Chain A"/>
    <property type="match status" value="1"/>
</dbReference>
<dbReference type="InterPro" id="IPR000210">
    <property type="entry name" value="BTB/POZ_dom"/>
</dbReference>
<dbReference type="InterPro" id="IPR011333">
    <property type="entry name" value="SKP1/BTB/POZ_sf"/>
</dbReference>
<dbReference type="InterPro" id="IPR036236">
    <property type="entry name" value="Znf_C2H2_sf"/>
</dbReference>
<dbReference type="InterPro" id="IPR013087">
    <property type="entry name" value="Znf_C2H2_type"/>
</dbReference>
<dbReference type="PANTHER" id="PTHR24383:SF10">
    <property type="entry name" value="ZINC FINGER AND BTB DOMAIN-CONTAINING PROTEIN 44"/>
    <property type="match status" value="1"/>
</dbReference>
<dbReference type="PANTHER" id="PTHR24383">
    <property type="entry name" value="ZINC FINGER PROTEIN"/>
    <property type="match status" value="1"/>
</dbReference>
<dbReference type="Pfam" id="PF00651">
    <property type="entry name" value="BTB"/>
    <property type="match status" value="1"/>
</dbReference>
<dbReference type="Pfam" id="PF00096">
    <property type="entry name" value="zf-C2H2"/>
    <property type="match status" value="4"/>
</dbReference>
<dbReference type="SMART" id="SM00225">
    <property type="entry name" value="BTB"/>
    <property type="match status" value="1"/>
</dbReference>
<dbReference type="SMART" id="SM00355">
    <property type="entry name" value="ZnF_C2H2"/>
    <property type="match status" value="4"/>
</dbReference>
<dbReference type="SUPFAM" id="SSF57667">
    <property type="entry name" value="beta-beta-alpha zinc fingers"/>
    <property type="match status" value="2"/>
</dbReference>
<dbReference type="SUPFAM" id="SSF54695">
    <property type="entry name" value="POZ domain"/>
    <property type="match status" value="1"/>
</dbReference>
<dbReference type="PROSITE" id="PS50097">
    <property type="entry name" value="BTB"/>
    <property type="match status" value="1"/>
</dbReference>
<dbReference type="PROSITE" id="PS00028">
    <property type="entry name" value="ZINC_FINGER_C2H2_1"/>
    <property type="match status" value="4"/>
</dbReference>
<dbReference type="PROSITE" id="PS50157">
    <property type="entry name" value="ZINC_FINGER_C2H2_2"/>
    <property type="match status" value="4"/>
</dbReference>
<feature type="chain" id="PRO_0000274608" description="Zinc finger and BTB domain-containing protein 44">
    <location>
        <begin position="1"/>
        <end position="570"/>
    </location>
</feature>
<feature type="domain" description="BTB" evidence="3">
    <location>
        <begin position="31"/>
        <end position="98"/>
    </location>
</feature>
<feature type="zinc finger region" description="C2H2-type 1" evidence="4">
    <location>
        <begin position="399"/>
        <end position="421"/>
    </location>
</feature>
<feature type="zinc finger region" description="C2H2-type 2" evidence="4">
    <location>
        <begin position="427"/>
        <end position="449"/>
    </location>
</feature>
<feature type="zinc finger region" description="C2H2-type 3" evidence="4">
    <location>
        <begin position="455"/>
        <end position="479"/>
    </location>
</feature>
<feature type="zinc finger region" description="C2H2-type 4" evidence="4">
    <location>
        <begin position="487"/>
        <end position="511"/>
    </location>
</feature>
<feature type="region of interest" description="Disordered" evidence="5">
    <location>
        <begin position="194"/>
        <end position="220"/>
    </location>
</feature>
<feature type="region of interest" description="Disordered" evidence="5">
    <location>
        <begin position="243"/>
        <end position="267"/>
    </location>
</feature>
<feature type="region of interest" description="Disordered" evidence="5">
    <location>
        <begin position="295"/>
        <end position="369"/>
    </location>
</feature>
<feature type="compositionally biased region" description="Polar residues" evidence="5">
    <location>
        <begin position="199"/>
        <end position="220"/>
    </location>
</feature>
<feature type="compositionally biased region" description="Low complexity" evidence="5">
    <location>
        <begin position="304"/>
        <end position="318"/>
    </location>
</feature>
<feature type="compositionally biased region" description="Polar residues" evidence="5">
    <location>
        <begin position="352"/>
        <end position="361"/>
    </location>
</feature>
<feature type="modified residue" description="Phosphoserine" evidence="9">
    <location>
        <position position="135"/>
    </location>
</feature>
<feature type="modified residue" description="Phosphoserine" evidence="2">
    <location>
        <position position="159"/>
    </location>
</feature>
<feature type="modified residue" description="Phosphoserine" evidence="10 13">
    <location>
        <position position="161"/>
    </location>
</feature>
<feature type="modified residue" description="Phosphoserine" evidence="2">
    <location>
        <position position="165"/>
    </location>
</feature>
<feature type="modified residue" description="Phosphoserine" evidence="11">
    <location>
        <position position="191"/>
    </location>
</feature>
<feature type="modified residue" description="Phosphoserine" evidence="11 12 13">
    <location>
        <position position="194"/>
    </location>
</feature>
<feature type="modified residue" description="Phosphothreonine" evidence="2">
    <location>
        <position position="200"/>
    </location>
</feature>
<feature type="cross-link" description="Glycyl lysine isopeptide (Lys-Gly) (interchain with G-Cter in SUMO2)" evidence="15">
    <location>
        <position position="4"/>
    </location>
</feature>
<feature type="cross-link" description="Glycyl lysine isopeptide (Lys-Gly) (interchain with G-Cter in SUMO2)" evidence="14">
    <location>
        <position position="290"/>
    </location>
</feature>
<feature type="splice variant" id="VSP_022834" description="In isoform 2." evidence="7">
    <original>GKRCFRCQICSATFTSFGEYKHHMRVSRHIIRKPRIYECKTCGAMFTNSGNLIVHLRSLNHEASELANYFQSSDFLVPDYLNQEQEETLVQYDLGEHGFESNSSVQMPVISQYHSKGKEP</original>
    <variation>VPLQRQGTMIDNSQAVDEMTRNGE</variation>
    <location>
        <begin position="451"/>
        <end position="570"/>
    </location>
</feature>
<feature type="splice variant" id="VSP_022835" description="In isoform 4." evidence="7">
    <original>GKRCFRCQICSATFTSFGEYKHHMRVSRHIIRKPRIYECKTCGAMFTNSGNLIVHLRSLNHEASELANYFQSSDFLVPDYLNQEQEETLVQYDLGEHGFESNSSVQMPVISQYHSKGKEP</original>
    <variation>GHPRKSASRSSSATNCC</variation>
    <location>
        <begin position="451"/>
        <end position="570"/>
    </location>
</feature>
<feature type="splice variant" id="VSP_022836" description="In isoform 3." evidence="7">
    <location>
        <begin position="451"/>
        <end position="558"/>
    </location>
</feature>
<feature type="splice variant" id="VSP_022837" description="In isoform 3." evidence="7">
    <location>
        <begin position="562"/>
        <end position="570"/>
    </location>
</feature>
<feature type="sequence variant" id="VAR_030336" description="In dbSNP:rs17857365." evidence="6">
    <original>K</original>
    <variation>E</variation>
    <location>
        <position position="185"/>
    </location>
</feature>
<feature type="sequence conflict" description="In Ref. 2; AAH30580." evidence="8" ref="2">
    <original>F</original>
    <variation>L</variation>
    <location>
        <position position="496"/>
    </location>
</feature>